<sequence length="213" mass="23074">MDSAQIQKAVKEARTLAKPRNFTQSVDLIVNLKELDLTRPENRLKEQIVLPSGKGKDTKIAVIAKGDLAAQAAEMGLTVIRQEELEELGKNKKAAKRIANEHGFFIAQADMMPLVGKSLGPVLGPRGKMPQPVPGNANLAPLVARFKKTVAINTRDKSLFQVYIGTEAMSDEEIAANAEAILNVVAKKYEKGLYHVKSAFTKLTMGAAAPISK</sequence>
<evidence type="ECO:0000250" key="1"/>
<evidence type="ECO:0000255" key="2">
    <source>
        <dbReference type="HAMAP-Rule" id="MF_01318"/>
    </source>
</evidence>
<evidence type="ECO:0000305" key="3"/>
<gene>
    <name evidence="2" type="primary">rpl1</name>
    <name type="ordered locus">Mevan_1273</name>
</gene>
<organism>
    <name type="scientific">Methanococcus vannielii (strain ATCC 35089 / DSM 1224 / JCM 13029 / OCM 148 / SB)</name>
    <dbReference type="NCBI Taxonomy" id="406327"/>
    <lineage>
        <taxon>Archaea</taxon>
        <taxon>Methanobacteriati</taxon>
        <taxon>Methanobacteriota</taxon>
        <taxon>Methanomada group</taxon>
        <taxon>Methanococci</taxon>
        <taxon>Methanococcales</taxon>
        <taxon>Methanococcaceae</taxon>
        <taxon>Methanococcus</taxon>
    </lineage>
</organism>
<keyword id="KW-0678">Repressor</keyword>
<keyword id="KW-0687">Ribonucleoprotein</keyword>
<keyword id="KW-0689">Ribosomal protein</keyword>
<keyword id="KW-0694">RNA-binding</keyword>
<keyword id="KW-0699">rRNA-binding</keyword>
<keyword id="KW-0810">Translation regulation</keyword>
<keyword id="KW-0820">tRNA-binding</keyword>
<comment type="function">
    <text evidence="1">Probably involved in E site tRNA release (By similarity). Binds directly to 23S rRNA.</text>
</comment>
<comment type="function">
    <text>Protein L1 is also a translational repressor protein, it controls the translation of the L1 operon by binding to its mRNA. Thus it also controls transcription of L10 and L12 by translational coupling. Unlike the case in E.coli, where the site is in the untranslated mRNA leader, this site is within the L1 protein's structural gene.</text>
</comment>
<comment type="subunit">
    <text>Part of the 50S ribosomal subunit.</text>
</comment>
<comment type="similarity">
    <text evidence="2">Belongs to the universal ribosomal protein uL1 family.</text>
</comment>
<dbReference type="EMBL" id="X16023">
    <property type="protein sequence ID" value="CAA34156.1"/>
    <property type="molecule type" value="Genomic_DNA"/>
</dbReference>
<dbReference type="EMBL" id="CP000742">
    <property type="protein sequence ID" value="ABR55170.1"/>
    <property type="molecule type" value="Genomic_DNA"/>
</dbReference>
<dbReference type="PIR" id="S08390">
    <property type="entry name" value="R5MX1"/>
</dbReference>
<dbReference type="RefSeq" id="WP_012066085.1">
    <property type="nucleotide sequence ID" value="NC_009634.1"/>
</dbReference>
<dbReference type="SMR" id="P15824"/>
<dbReference type="STRING" id="406327.Mevan_1273"/>
<dbReference type="GeneID" id="5324661"/>
<dbReference type="KEGG" id="mvn:Mevan_1273"/>
<dbReference type="eggNOG" id="arCOG04289">
    <property type="taxonomic scope" value="Archaea"/>
</dbReference>
<dbReference type="HOGENOM" id="CLU_062853_4_0_2"/>
<dbReference type="OrthoDB" id="10382at2157"/>
<dbReference type="Proteomes" id="UP000001107">
    <property type="component" value="Chromosome"/>
</dbReference>
<dbReference type="GO" id="GO:0015934">
    <property type="term" value="C:large ribosomal subunit"/>
    <property type="evidence" value="ECO:0007669"/>
    <property type="project" value="InterPro"/>
</dbReference>
<dbReference type="GO" id="GO:0019843">
    <property type="term" value="F:rRNA binding"/>
    <property type="evidence" value="ECO:0007669"/>
    <property type="project" value="UniProtKB-UniRule"/>
</dbReference>
<dbReference type="GO" id="GO:0003735">
    <property type="term" value="F:structural constituent of ribosome"/>
    <property type="evidence" value="ECO:0007669"/>
    <property type="project" value="InterPro"/>
</dbReference>
<dbReference type="GO" id="GO:0000049">
    <property type="term" value="F:tRNA binding"/>
    <property type="evidence" value="ECO:0007669"/>
    <property type="project" value="UniProtKB-KW"/>
</dbReference>
<dbReference type="GO" id="GO:0006417">
    <property type="term" value="P:regulation of translation"/>
    <property type="evidence" value="ECO:0007669"/>
    <property type="project" value="UniProtKB-KW"/>
</dbReference>
<dbReference type="GO" id="GO:0006412">
    <property type="term" value="P:translation"/>
    <property type="evidence" value="ECO:0007669"/>
    <property type="project" value="UniProtKB-UniRule"/>
</dbReference>
<dbReference type="CDD" id="cd00403">
    <property type="entry name" value="Ribosomal_L1"/>
    <property type="match status" value="1"/>
</dbReference>
<dbReference type="FunFam" id="3.40.50.790:FF:000005">
    <property type="entry name" value="50S ribosomal protein L1"/>
    <property type="match status" value="1"/>
</dbReference>
<dbReference type="Gene3D" id="3.30.190.20">
    <property type="match status" value="1"/>
</dbReference>
<dbReference type="Gene3D" id="3.40.50.790">
    <property type="match status" value="1"/>
</dbReference>
<dbReference type="HAMAP" id="MF_01318_A">
    <property type="entry name" value="Ribosomal_uL1_A"/>
    <property type="match status" value="1"/>
</dbReference>
<dbReference type="InterPro" id="IPR002143">
    <property type="entry name" value="Ribosomal_uL1"/>
</dbReference>
<dbReference type="InterPro" id="IPR023674">
    <property type="entry name" value="Ribosomal_uL1-like"/>
</dbReference>
<dbReference type="InterPro" id="IPR028364">
    <property type="entry name" value="Ribosomal_uL1/biogenesis"/>
</dbReference>
<dbReference type="InterPro" id="IPR016095">
    <property type="entry name" value="Ribosomal_uL1_3-a/b-sand"/>
</dbReference>
<dbReference type="InterPro" id="IPR023669">
    <property type="entry name" value="Ribosomal_uL1_arc"/>
</dbReference>
<dbReference type="InterPro" id="IPR023673">
    <property type="entry name" value="Ribosomal_uL1_CS"/>
</dbReference>
<dbReference type="NCBIfam" id="NF003244">
    <property type="entry name" value="PRK04203.1"/>
    <property type="match status" value="1"/>
</dbReference>
<dbReference type="PANTHER" id="PTHR36427">
    <property type="entry name" value="54S RIBOSOMAL PROTEIN L1, MITOCHONDRIAL"/>
    <property type="match status" value="1"/>
</dbReference>
<dbReference type="PANTHER" id="PTHR36427:SF3">
    <property type="entry name" value="LARGE RIBOSOMAL SUBUNIT PROTEIN UL1M"/>
    <property type="match status" value="1"/>
</dbReference>
<dbReference type="Pfam" id="PF00687">
    <property type="entry name" value="Ribosomal_L1"/>
    <property type="match status" value="1"/>
</dbReference>
<dbReference type="PIRSF" id="PIRSF002155">
    <property type="entry name" value="Ribosomal_L1"/>
    <property type="match status" value="1"/>
</dbReference>
<dbReference type="SUPFAM" id="SSF56808">
    <property type="entry name" value="Ribosomal protein L1"/>
    <property type="match status" value="1"/>
</dbReference>
<dbReference type="PROSITE" id="PS01199">
    <property type="entry name" value="RIBOSOMAL_L1"/>
    <property type="match status" value="1"/>
</dbReference>
<protein>
    <recommendedName>
        <fullName evidence="2">Large ribosomal subunit protein uL1</fullName>
    </recommendedName>
    <alternativeName>
        <fullName evidence="3">50S ribosomal protein L1</fullName>
    </alternativeName>
    <alternativeName>
        <fullName>Ribosomal protein ML6</fullName>
    </alternativeName>
</protein>
<feature type="chain" id="PRO_0000125804" description="Large ribosomal subunit protein uL1">
    <location>
        <begin position="1"/>
        <end position="213"/>
    </location>
</feature>
<feature type="sequence conflict" description="In Ref. 1; CAA34156." evidence="3" ref="1">
    <original>P</original>
    <variation>H</variation>
    <location>
        <position position="40"/>
    </location>
</feature>
<feature type="sequence conflict" description="In Ref. 1; CAA34156." evidence="3" ref="1">
    <original>QPV</original>
    <variation>TPL</variation>
    <location>
        <begin position="131"/>
        <end position="133"/>
    </location>
</feature>
<accession>P15824</accession>
<accession>A6URP8</accession>
<proteinExistence type="evidence at protein level"/>
<name>RL1_METVS</name>
<reference key="1">
    <citation type="journal article" date="1990" name="Nucleic Acids Res.">
        <title>Structure, organization and evolution of the L1 equivalent ribosomal protein gene of the archaebacterium Methanococcus vannielii.</title>
        <authorList>
            <person name="Baier G."/>
            <person name="Piendl W."/>
            <person name="Redl B."/>
            <person name="Stoeffler G."/>
        </authorList>
    </citation>
    <scope>NUCLEOTIDE SEQUENCE [GENOMIC DNA]</scope>
</reference>
<reference key="2">
    <citation type="submission" date="1993-08" db="EMBL/GenBank/DDBJ databases">
        <authorList>
            <person name="Piendl W."/>
        </authorList>
    </citation>
    <scope>SEQUENCE REVISION</scope>
</reference>
<reference key="3">
    <citation type="submission" date="2007-06" db="EMBL/GenBank/DDBJ databases">
        <title>Complete sequence of Methanococcus vannielii SB.</title>
        <authorList>
            <consortium name="US DOE Joint Genome Institute"/>
            <person name="Copeland A."/>
            <person name="Lucas S."/>
            <person name="Lapidus A."/>
            <person name="Barry K."/>
            <person name="Glavina del Rio T."/>
            <person name="Dalin E."/>
            <person name="Tice H."/>
            <person name="Pitluck S."/>
            <person name="Chain P."/>
            <person name="Malfatti S."/>
            <person name="Shin M."/>
            <person name="Vergez L."/>
            <person name="Schmutz J."/>
            <person name="Larimer F."/>
            <person name="Land M."/>
            <person name="Hauser L."/>
            <person name="Kyrpides N."/>
            <person name="Anderson I."/>
            <person name="Sieprawska-Lupa M."/>
            <person name="Whitman W.B."/>
            <person name="Richardson P."/>
        </authorList>
    </citation>
    <scope>NUCLEOTIDE SEQUENCE [LARGE SCALE GENOMIC DNA]</scope>
    <source>
        <strain>ATCC 35089 / DSM 1224 / JCM 13029 / OCM 148 / SB</strain>
    </source>
</reference>
<reference key="4">
    <citation type="journal article" date="1994" name="J. Bacteriol.">
        <title>Autogenous translational regulation of the ribosomal MvaL1 operon in the archaebacterium Methanococcus vannielii.</title>
        <authorList>
            <person name="Hanner M."/>
            <person name="Mayer C."/>
            <person name="Koehrer C."/>
            <person name="Golderer G."/>
            <person name="Groebner P."/>
            <person name="Piendl W."/>
        </authorList>
    </citation>
    <scope>AUTOGENOUS TRANSLATIONAL REPRESSOR</scope>
</reference>
<reference key="5">
    <citation type="journal article" date="1998" name="Eur. J. Biochem.">
        <title>Interaction of ribosomal L1 proteins from mesophilic and thermophilic Archaea and Bacteria with specific L1-binding sites on 23S rRNA and mRNA.</title>
        <authorList>
            <person name="Koehrer C."/>
            <person name="Mayer C."/>
            <person name="Neumair O."/>
            <person name="Groebner P."/>
            <person name="Piendl W."/>
        </authorList>
    </citation>
    <scope>BINDING TO ENDOGENOUS 23S RRNA AND TO L1 MRNA</scope>
</reference>
<reference key="6">
    <citation type="journal article" date="1998" name="Mol. Microbiol.">
        <title>MvaL1 autoregulates the synthesis of the three ribosomal proteins encoded on the MvaL1 operon of the archaeon Methanococcus vannielii by inhibiting its own translation before or at the formation of the first peptide bond.</title>
        <authorList>
            <person name="Mayer C."/>
            <person name="Koehrer C."/>
            <person name="Groebner P."/>
            <person name="Piendl W."/>
        </authorList>
    </citation>
    <scope>MECHANISM OF TRANSLATION REGULATION</scope>
    <scope>BINDING TO 23S RRNA</scope>
</reference>